<comment type="function">
    <text>The epsilon chain is a beta-type chain of early mammalian embryonic hemoglobin.</text>
</comment>
<comment type="subunit">
    <text>Heterotetramer of two alpha chains and two epsilon chains in early embryonic hemoglobin Gower-2; two zeta chains and two epsilon chains in early embryonic hemoglobin Gower-1.</text>
</comment>
<comment type="tissue specificity">
    <text>Red blood cells.</text>
</comment>
<comment type="similarity">
    <text evidence="2">Belongs to the globin family.</text>
</comment>
<organism>
    <name type="scientific">Otolemur crassicaudatus</name>
    <name type="common">Brown greater galago</name>
    <name type="synonym">Galago crassicaudatus</name>
    <dbReference type="NCBI Taxonomy" id="9463"/>
    <lineage>
        <taxon>Eukaryota</taxon>
        <taxon>Metazoa</taxon>
        <taxon>Chordata</taxon>
        <taxon>Craniata</taxon>
        <taxon>Vertebrata</taxon>
        <taxon>Euteleostomi</taxon>
        <taxon>Mammalia</taxon>
        <taxon>Eutheria</taxon>
        <taxon>Euarchontoglires</taxon>
        <taxon>Primates</taxon>
        <taxon>Strepsirrhini</taxon>
        <taxon>Lorisiformes</taxon>
        <taxon>Galagidae</taxon>
        <taxon>Otolemur</taxon>
    </lineage>
</organism>
<evidence type="ECO:0000250" key="1">
    <source>
        <dbReference type="UniProtKB" id="P02100"/>
    </source>
</evidence>
<evidence type="ECO:0000255" key="2">
    <source>
        <dbReference type="PROSITE-ProRule" id="PRU00238"/>
    </source>
</evidence>
<protein>
    <recommendedName>
        <fullName>Hemoglobin subunit epsilon</fullName>
    </recommendedName>
    <alternativeName>
        <fullName>Epsilon-globin</fullName>
    </alternativeName>
    <alternativeName>
        <fullName>Hemoglobin epsilon chain</fullName>
    </alternativeName>
</protein>
<feature type="chain" id="PRO_0000053210" description="Hemoglobin subunit epsilon">
    <location>
        <begin position="1"/>
        <end position="147"/>
    </location>
</feature>
<feature type="domain" description="Globin" evidence="2">
    <location>
        <begin position="3"/>
        <end position="147"/>
    </location>
</feature>
<feature type="binding site" description="distal binding residue" evidence="2">
    <location>
        <position position="64"/>
    </location>
    <ligand>
        <name>heme b</name>
        <dbReference type="ChEBI" id="CHEBI:60344"/>
    </ligand>
    <ligandPart>
        <name>Fe</name>
        <dbReference type="ChEBI" id="CHEBI:18248"/>
    </ligandPart>
</feature>
<feature type="binding site" description="proximal binding residue" evidence="2">
    <location>
        <position position="93"/>
    </location>
    <ligand>
        <name>heme b</name>
        <dbReference type="ChEBI" id="CHEBI:60344"/>
    </ligand>
    <ligandPart>
        <name>Fe</name>
        <dbReference type="ChEBI" id="CHEBI:18248"/>
    </ligandPart>
</feature>
<feature type="modified residue" description="Phosphoserine" evidence="1">
    <location>
        <position position="14"/>
    </location>
</feature>
<feature type="modified residue" description="Phosphoserine" evidence="1">
    <location>
        <position position="51"/>
    </location>
</feature>
<name>HBE_OTOCR</name>
<accession>P19759</accession>
<proteinExistence type="evidence at transcript level"/>
<reference key="1">
    <citation type="journal article" date="1988" name="J. Mol. Biol.">
        <title>Embryonic epsilon and gamma globin genes of a prosimian primate (Galago crassicaudatus). Nucleotide and amino acid sequences, developmental regulation and phylogenetic footprints.</title>
        <authorList>
            <person name="Tagle D.A."/>
            <person name="Koop B.F."/>
            <person name="Goodman M."/>
            <person name="Slightom J.L."/>
            <person name="Hess D.L."/>
            <person name="Jones R.T."/>
        </authorList>
    </citation>
    <scope>NUCLEOTIDE SEQUENCE [GENOMIC DNA]</scope>
    <source>
        <tissue>Liver</tissue>
    </source>
</reference>
<reference key="2">
    <citation type="journal article" date="1992" name="Genomics">
        <title>The beta globin gene cluster of the prosimian primate Galago crassicaudatus: nucleotide sequence determination of the 41-kb cluster and comparative sequence analyses.</title>
        <authorList>
            <person name="Tagle D.A."/>
            <person name="Stanhope M.J."/>
            <person name="Siemieniak D.R."/>
            <person name="Benson P.J."/>
            <person name="Goodman M."/>
            <person name="Slightom J.L."/>
        </authorList>
    </citation>
    <scope>NUCLEOTIDE SEQUENCE [GENOMIC DNA]</scope>
    <source>
        <tissue>Liver</tissue>
    </source>
</reference>
<gene>
    <name type="primary">HBE1</name>
</gene>
<sequence>MVHFTAEEKAIIMSLWGKVNIEEAGGEALGRLLVVYPWTQRFFETFGNLSSASAIMGNPKVKAHGKKVLTSFGEAVKNMDNLKGAFAKLSELHCDKLHVDPENFKLLGNVMVIILATHFGKEFTPDVQAAWQKLVSGVATALAHKYH</sequence>
<keyword id="KW-0349">Heme</keyword>
<keyword id="KW-0408">Iron</keyword>
<keyword id="KW-0479">Metal-binding</keyword>
<keyword id="KW-0561">Oxygen transport</keyword>
<keyword id="KW-0597">Phosphoprotein</keyword>
<keyword id="KW-0813">Transport</keyword>
<dbReference type="EMBL" id="M36304">
    <property type="protein sequence ID" value="AAA35446.1"/>
    <property type="molecule type" value="Genomic_DNA"/>
</dbReference>
<dbReference type="EMBL" id="U60902">
    <property type="protein sequence ID" value="AAC50960.1"/>
    <property type="molecule type" value="Genomic_DNA"/>
</dbReference>
<dbReference type="PIR" id="A42829">
    <property type="entry name" value="A42829"/>
</dbReference>
<dbReference type="PIR" id="S01375">
    <property type="entry name" value="HEGC"/>
</dbReference>
<dbReference type="SMR" id="P19759"/>
<dbReference type="GO" id="GO:0072562">
    <property type="term" value="C:blood microparticle"/>
    <property type="evidence" value="ECO:0007669"/>
    <property type="project" value="TreeGrafter"/>
</dbReference>
<dbReference type="GO" id="GO:0031838">
    <property type="term" value="C:haptoglobin-hemoglobin complex"/>
    <property type="evidence" value="ECO:0007669"/>
    <property type="project" value="TreeGrafter"/>
</dbReference>
<dbReference type="GO" id="GO:0005833">
    <property type="term" value="C:hemoglobin complex"/>
    <property type="evidence" value="ECO:0007669"/>
    <property type="project" value="InterPro"/>
</dbReference>
<dbReference type="GO" id="GO:0031720">
    <property type="term" value="F:haptoglobin binding"/>
    <property type="evidence" value="ECO:0007669"/>
    <property type="project" value="TreeGrafter"/>
</dbReference>
<dbReference type="GO" id="GO:0020037">
    <property type="term" value="F:heme binding"/>
    <property type="evidence" value="ECO:0007669"/>
    <property type="project" value="InterPro"/>
</dbReference>
<dbReference type="GO" id="GO:0031721">
    <property type="term" value="F:hemoglobin alpha binding"/>
    <property type="evidence" value="ECO:0007669"/>
    <property type="project" value="TreeGrafter"/>
</dbReference>
<dbReference type="GO" id="GO:0046872">
    <property type="term" value="F:metal ion binding"/>
    <property type="evidence" value="ECO:0007669"/>
    <property type="project" value="UniProtKB-KW"/>
</dbReference>
<dbReference type="GO" id="GO:0043177">
    <property type="term" value="F:organic acid binding"/>
    <property type="evidence" value="ECO:0007669"/>
    <property type="project" value="TreeGrafter"/>
</dbReference>
<dbReference type="GO" id="GO:0019825">
    <property type="term" value="F:oxygen binding"/>
    <property type="evidence" value="ECO:0007669"/>
    <property type="project" value="InterPro"/>
</dbReference>
<dbReference type="GO" id="GO:0005344">
    <property type="term" value="F:oxygen carrier activity"/>
    <property type="evidence" value="ECO:0007669"/>
    <property type="project" value="UniProtKB-KW"/>
</dbReference>
<dbReference type="GO" id="GO:0004601">
    <property type="term" value="F:peroxidase activity"/>
    <property type="evidence" value="ECO:0007669"/>
    <property type="project" value="TreeGrafter"/>
</dbReference>
<dbReference type="GO" id="GO:0042744">
    <property type="term" value="P:hydrogen peroxide catabolic process"/>
    <property type="evidence" value="ECO:0007669"/>
    <property type="project" value="TreeGrafter"/>
</dbReference>
<dbReference type="CDD" id="cd08925">
    <property type="entry name" value="Hb-beta-like"/>
    <property type="match status" value="1"/>
</dbReference>
<dbReference type="FunFam" id="1.10.490.10:FF:000001">
    <property type="entry name" value="Hemoglobin subunit beta"/>
    <property type="match status" value="1"/>
</dbReference>
<dbReference type="Gene3D" id="1.10.490.10">
    <property type="entry name" value="Globins"/>
    <property type="match status" value="1"/>
</dbReference>
<dbReference type="InterPro" id="IPR000971">
    <property type="entry name" value="Globin"/>
</dbReference>
<dbReference type="InterPro" id="IPR009050">
    <property type="entry name" value="Globin-like_sf"/>
</dbReference>
<dbReference type="InterPro" id="IPR012292">
    <property type="entry name" value="Globin/Proto"/>
</dbReference>
<dbReference type="InterPro" id="IPR002337">
    <property type="entry name" value="Hemoglobin_b"/>
</dbReference>
<dbReference type="InterPro" id="IPR050056">
    <property type="entry name" value="Hemoglobin_oxygen_transport"/>
</dbReference>
<dbReference type="PANTHER" id="PTHR11442">
    <property type="entry name" value="HEMOGLOBIN FAMILY MEMBER"/>
    <property type="match status" value="1"/>
</dbReference>
<dbReference type="PANTHER" id="PTHR11442:SF7">
    <property type="entry name" value="HEMOGLOBIN SUBUNIT EPSILON"/>
    <property type="match status" value="1"/>
</dbReference>
<dbReference type="Pfam" id="PF00042">
    <property type="entry name" value="Globin"/>
    <property type="match status" value="1"/>
</dbReference>
<dbReference type="PRINTS" id="PR00814">
    <property type="entry name" value="BETAHAEM"/>
</dbReference>
<dbReference type="SUPFAM" id="SSF46458">
    <property type="entry name" value="Globin-like"/>
    <property type="match status" value="1"/>
</dbReference>
<dbReference type="PROSITE" id="PS01033">
    <property type="entry name" value="GLOBIN"/>
    <property type="match status" value="1"/>
</dbReference>